<organism>
    <name type="scientific">Carica papaya</name>
    <name type="common">Papaya</name>
    <dbReference type="NCBI Taxonomy" id="3649"/>
    <lineage>
        <taxon>Eukaryota</taxon>
        <taxon>Viridiplantae</taxon>
        <taxon>Streptophyta</taxon>
        <taxon>Embryophyta</taxon>
        <taxon>Tracheophyta</taxon>
        <taxon>Spermatophyta</taxon>
        <taxon>Magnoliopsida</taxon>
        <taxon>eudicotyledons</taxon>
        <taxon>Gunneridae</taxon>
        <taxon>Pentapetalae</taxon>
        <taxon>rosids</taxon>
        <taxon>malvids</taxon>
        <taxon>Brassicales</taxon>
        <taxon>Caricaceae</taxon>
        <taxon>Carica</taxon>
    </lineage>
</organism>
<evidence type="ECO:0000255" key="1">
    <source>
        <dbReference type="HAMAP-Rule" id="MF_01393"/>
    </source>
</evidence>
<feature type="chain" id="PRO_0000362536" description="ATP synthase subunit a, chloroplastic">
    <location>
        <begin position="1"/>
        <end position="247"/>
    </location>
</feature>
<feature type="transmembrane region" description="Helical" evidence="1">
    <location>
        <begin position="38"/>
        <end position="58"/>
    </location>
</feature>
<feature type="transmembrane region" description="Helical" evidence="1">
    <location>
        <begin position="95"/>
        <end position="115"/>
    </location>
</feature>
<feature type="transmembrane region" description="Helical" evidence="1">
    <location>
        <begin position="134"/>
        <end position="154"/>
    </location>
</feature>
<feature type="transmembrane region" description="Helical" evidence="1">
    <location>
        <begin position="199"/>
        <end position="219"/>
    </location>
</feature>
<feature type="transmembrane region" description="Helical" evidence="1">
    <location>
        <begin position="220"/>
        <end position="240"/>
    </location>
</feature>
<comment type="function">
    <text evidence="1">Key component of the proton channel; it plays a direct role in the translocation of protons across the membrane.</text>
</comment>
<comment type="subunit">
    <text evidence="1">F-type ATPases have 2 components, CF(1) - the catalytic core - and CF(0) - the membrane proton channel. CF(1) has five subunits: alpha(3), beta(3), gamma(1), delta(1), epsilon(1). CF(0) has four main subunits: a, b, b' and c.</text>
</comment>
<comment type="subcellular location">
    <subcellularLocation>
        <location evidence="1">Plastid</location>
        <location evidence="1">Chloroplast thylakoid membrane</location>
        <topology evidence="1">Multi-pass membrane protein</topology>
    </subcellularLocation>
</comment>
<comment type="similarity">
    <text evidence="1">Belongs to the ATPase A chain family.</text>
</comment>
<name>ATPI_CARPA</name>
<accession>B1A923</accession>
<dbReference type="EMBL" id="EU431223">
    <property type="protein sequence ID" value="ABY86770.1"/>
    <property type="molecule type" value="Genomic_DNA"/>
</dbReference>
<dbReference type="RefSeq" id="YP_001671671.1">
    <property type="nucleotide sequence ID" value="NC_010323.1"/>
</dbReference>
<dbReference type="SMR" id="B1A923"/>
<dbReference type="GeneID" id="5878355"/>
<dbReference type="KEGG" id="cpap:5878355"/>
<dbReference type="OrthoDB" id="2303at2759"/>
<dbReference type="GO" id="GO:0009535">
    <property type="term" value="C:chloroplast thylakoid membrane"/>
    <property type="evidence" value="ECO:0007669"/>
    <property type="project" value="UniProtKB-SubCell"/>
</dbReference>
<dbReference type="GO" id="GO:0005886">
    <property type="term" value="C:plasma membrane"/>
    <property type="evidence" value="ECO:0007669"/>
    <property type="project" value="UniProtKB-UniRule"/>
</dbReference>
<dbReference type="GO" id="GO:0045259">
    <property type="term" value="C:proton-transporting ATP synthase complex"/>
    <property type="evidence" value="ECO:0007669"/>
    <property type="project" value="UniProtKB-KW"/>
</dbReference>
<dbReference type="GO" id="GO:0046933">
    <property type="term" value="F:proton-transporting ATP synthase activity, rotational mechanism"/>
    <property type="evidence" value="ECO:0007669"/>
    <property type="project" value="UniProtKB-UniRule"/>
</dbReference>
<dbReference type="CDD" id="cd00310">
    <property type="entry name" value="ATP-synt_Fo_a_6"/>
    <property type="match status" value="1"/>
</dbReference>
<dbReference type="FunFam" id="1.20.120.220:FF:000001">
    <property type="entry name" value="ATP synthase subunit a, chloroplastic"/>
    <property type="match status" value="1"/>
</dbReference>
<dbReference type="Gene3D" id="1.20.120.220">
    <property type="entry name" value="ATP synthase, F0 complex, subunit A"/>
    <property type="match status" value="1"/>
</dbReference>
<dbReference type="HAMAP" id="MF_01393">
    <property type="entry name" value="ATP_synth_a_bact"/>
    <property type="match status" value="1"/>
</dbReference>
<dbReference type="InterPro" id="IPR045082">
    <property type="entry name" value="ATP_syn_F0_a_bact/chloroplast"/>
</dbReference>
<dbReference type="InterPro" id="IPR000568">
    <property type="entry name" value="ATP_synth_F0_asu"/>
</dbReference>
<dbReference type="InterPro" id="IPR023011">
    <property type="entry name" value="ATP_synth_F0_asu_AS"/>
</dbReference>
<dbReference type="InterPro" id="IPR035908">
    <property type="entry name" value="F0_ATP_A_sf"/>
</dbReference>
<dbReference type="NCBIfam" id="TIGR01131">
    <property type="entry name" value="ATP_synt_6_or_A"/>
    <property type="match status" value="1"/>
</dbReference>
<dbReference type="PANTHER" id="PTHR42823">
    <property type="entry name" value="ATP SYNTHASE SUBUNIT A, CHLOROPLASTIC"/>
    <property type="match status" value="1"/>
</dbReference>
<dbReference type="PANTHER" id="PTHR42823:SF3">
    <property type="entry name" value="ATP SYNTHASE SUBUNIT A, CHLOROPLASTIC"/>
    <property type="match status" value="1"/>
</dbReference>
<dbReference type="Pfam" id="PF00119">
    <property type="entry name" value="ATP-synt_A"/>
    <property type="match status" value="1"/>
</dbReference>
<dbReference type="PRINTS" id="PR00123">
    <property type="entry name" value="ATPASEA"/>
</dbReference>
<dbReference type="SUPFAM" id="SSF81336">
    <property type="entry name" value="F1F0 ATP synthase subunit A"/>
    <property type="match status" value="1"/>
</dbReference>
<dbReference type="PROSITE" id="PS00449">
    <property type="entry name" value="ATPASE_A"/>
    <property type="match status" value="1"/>
</dbReference>
<gene>
    <name evidence="1" type="primary">atpI</name>
</gene>
<proteinExistence type="inferred from homology"/>
<protein>
    <recommendedName>
        <fullName evidence="1">ATP synthase subunit a, chloroplastic</fullName>
    </recommendedName>
    <alternativeName>
        <fullName evidence="1">ATP synthase F0 sector subunit a</fullName>
    </alternativeName>
    <alternativeName>
        <fullName evidence="1">F-ATPase subunit IV</fullName>
    </alternativeName>
</protein>
<geneLocation type="chloroplast"/>
<keyword id="KW-0066">ATP synthesis</keyword>
<keyword id="KW-0138">CF(0)</keyword>
<keyword id="KW-0150">Chloroplast</keyword>
<keyword id="KW-0375">Hydrogen ion transport</keyword>
<keyword id="KW-0406">Ion transport</keyword>
<keyword id="KW-0472">Membrane</keyword>
<keyword id="KW-0934">Plastid</keyword>
<keyword id="KW-0793">Thylakoid</keyword>
<keyword id="KW-0812">Transmembrane</keyword>
<keyword id="KW-1133">Transmembrane helix</keyword>
<keyword id="KW-0813">Transport</keyword>
<sequence>MDVISCSSNTLKGLYDISGVEVGQHLYWQIGGLQVHAQVLITSWVVIAILLGSAIIAVRNPQTIPTAGQNFFEYVLEFIRDVSKTQIGEEYGPWVPFIGTMFLFIFVSNWSGALLPWKIIQLPHGELAAPTNDINTTVALALLTSVAYFYAGLTKKGLGYFSKYIQPTPILLPINILEDFTKPLSLSFRLFGNILADELVVVVLVSLVPLVVPIPVMFLGLFTSGIQALIFATLAAAYIGESMEGHH</sequence>
<reference key="1">
    <citation type="journal article" date="2008" name="Nature">
        <title>The draft genome of the transgenic tropical fruit tree papaya (Carica papaya Linnaeus).</title>
        <authorList>
            <person name="Ming R."/>
            <person name="Hou S."/>
            <person name="Feng Y."/>
            <person name="Yu Q."/>
            <person name="Dionne-Laporte A."/>
            <person name="Saw J.H."/>
            <person name="Senin P."/>
            <person name="Wang W."/>
            <person name="Ly B.V."/>
            <person name="Lewis K.L."/>
            <person name="Salzberg S.L."/>
            <person name="Feng L."/>
            <person name="Jones M.R."/>
            <person name="Skelton R.L."/>
            <person name="Murray J.E."/>
            <person name="Chen C."/>
            <person name="Qian W."/>
            <person name="Shen J."/>
            <person name="Du P."/>
            <person name="Eustice M."/>
            <person name="Tong E."/>
            <person name="Tang H."/>
            <person name="Lyons E."/>
            <person name="Paull R.E."/>
            <person name="Michael T.P."/>
            <person name="Wall K."/>
            <person name="Rice D.W."/>
            <person name="Albert H."/>
            <person name="Wang M.L."/>
            <person name="Zhu Y.J."/>
            <person name="Schatz M."/>
            <person name="Nagarajan N."/>
            <person name="Acob R.A."/>
            <person name="Guan P."/>
            <person name="Blas A."/>
            <person name="Wai C.M."/>
            <person name="Ackerman C.M."/>
            <person name="Ren Y."/>
            <person name="Liu C."/>
            <person name="Wang J."/>
            <person name="Wang J."/>
            <person name="Na J.K."/>
            <person name="Shakirov E.V."/>
            <person name="Haas B."/>
            <person name="Thimmapuram J."/>
            <person name="Nelson D."/>
            <person name="Wang X."/>
            <person name="Bowers J.E."/>
            <person name="Gschwend A.R."/>
            <person name="Delcher A.L."/>
            <person name="Singh R."/>
            <person name="Suzuki J.Y."/>
            <person name="Tripathi S."/>
            <person name="Neupane K."/>
            <person name="Wei H."/>
            <person name="Irikura B."/>
            <person name="Paidi M."/>
            <person name="Jiang N."/>
            <person name="Zhang W."/>
            <person name="Presting G."/>
            <person name="Windsor A."/>
            <person name="Navajas-Perez R."/>
            <person name="Torres M.J."/>
            <person name="Feltus F.A."/>
            <person name="Porter B."/>
            <person name="Li Y."/>
            <person name="Burroughs A.M."/>
            <person name="Luo M.C."/>
            <person name="Liu L."/>
            <person name="Christopher D.A."/>
            <person name="Mount S.M."/>
            <person name="Moore P.H."/>
            <person name="Sugimura T."/>
            <person name="Jiang J."/>
            <person name="Schuler M.A."/>
            <person name="Friedman V."/>
            <person name="Mitchell-Olds T."/>
            <person name="Shippen D.E."/>
            <person name="dePamphilis C.W."/>
            <person name="Palmer J.D."/>
            <person name="Freeling M."/>
            <person name="Paterson A.H."/>
            <person name="Gonsalves D."/>
            <person name="Wang L."/>
            <person name="Alam M."/>
        </authorList>
    </citation>
    <scope>NUCLEOTIDE SEQUENCE [LARGE SCALE GENOMIC DNA]</scope>
    <source>
        <strain>cv. SunUp</strain>
    </source>
</reference>